<protein>
    <recommendedName>
        <fullName evidence="1">Lysine--tRNA ligase</fullName>
        <ecNumber evidence="1">6.1.1.6</ecNumber>
    </recommendedName>
    <alternativeName>
        <fullName evidence="1">Lysyl-tRNA synthetase</fullName>
        <shortName evidence="1">LysRS</shortName>
    </alternativeName>
</protein>
<name>SYK_SHEWM</name>
<organism>
    <name type="scientific">Shewanella woodyi (strain ATCC 51908 / MS32)</name>
    <dbReference type="NCBI Taxonomy" id="392500"/>
    <lineage>
        <taxon>Bacteria</taxon>
        <taxon>Pseudomonadati</taxon>
        <taxon>Pseudomonadota</taxon>
        <taxon>Gammaproteobacteria</taxon>
        <taxon>Alteromonadales</taxon>
        <taxon>Shewanellaceae</taxon>
        <taxon>Shewanella</taxon>
    </lineage>
</organism>
<dbReference type="EC" id="6.1.1.6" evidence="1"/>
<dbReference type="EMBL" id="CP000961">
    <property type="protein sequence ID" value="ACA85233.1"/>
    <property type="molecule type" value="Genomic_DNA"/>
</dbReference>
<dbReference type="RefSeq" id="WP_012323580.1">
    <property type="nucleotide sequence ID" value="NC_010506.1"/>
</dbReference>
<dbReference type="SMR" id="B1KFR7"/>
<dbReference type="STRING" id="392500.Swoo_0940"/>
<dbReference type="KEGG" id="swd:Swoo_0940"/>
<dbReference type="eggNOG" id="COG1190">
    <property type="taxonomic scope" value="Bacteria"/>
</dbReference>
<dbReference type="HOGENOM" id="CLU_008255_6_0_6"/>
<dbReference type="Proteomes" id="UP000002168">
    <property type="component" value="Chromosome"/>
</dbReference>
<dbReference type="GO" id="GO:0005829">
    <property type="term" value="C:cytosol"/>
    <property type="evidence" value="ECO:0007669"/>
    <property type="project" value="TreeGrafter"/>
</dbReference>
<dbReference type="GO" id="GO:0005524">
    <property type="term" value="F:ATP binding"/>
    <property type="evidence" value="ECO:0007669"/>
    <property type="project" value="UniProtKB-UniRule"/>
</dbReference>
<dbReference type="GO" id="GO:0004824">
    <property type="term" value="F:lysine-tRNA ligase activity"/>
    <property type="evidence" value="ECO:0007669"/>
    <property type="project" value="UniProtKB-UniRule"/>
</dbReference>
<dbReference type="GO" id="GO:0000287">
    <property type="term" value="F:magnesium ion binding"/>
    <property type="evidence" value="ECO:0007669"/>
    <property type="project" value="UniProtKB-UniRule"/>
</dbReference>
<dbReference type="GO" id="GO:0000049">
    <property type="term" value="F:tRNA binding"/>
    <property type="evidence" value="ECO:0007669"/>
    <property type="project" value="TreeGrafter"/>
</dbReference>
<dbReference type="GO" id="GO:0006430">
    <property type="term" value="P:lysyl-tRNA aminoacylation"/>
    <property type="evidence" value="ECO:0007669"/>
    <property type="project" value="UniProtKB-UniRule"/>
</dbReference>
<dbReference type="CDD" id="cd00775">
    <property type="entry name" value="LysRS_core"/>
    <property type="match status" value="1"/>
</dbReference>
<dbReference type="CDD" id="cd04322">
    <property type="entry name" value="LysRS_N"/>
    <property type="match status" value="1"/>
</dbReference>
<dbReference type="FunFam" id="2.40.50.140:FF:000024">
    <property type="entry name" value="Lysine--tRNA ligase"/>
    <property type="match status" value="1"/>
</dbReference>
<dbReference type="FunFam" id="3.30.930.10:FF:000001">
    <property type="entry name" value="Lysine--tRNA ligase"/>
    <property type="match status" value="1"/>
</dbReference>
<dbReference type="Gene3D" id="3.30.930.10">
    <property type="entry name" value="Bira Bifunctional Protein, Domain 2"/>
    <property type="match status" value="1"/>
</dbReference>
<dbReference type="Gene3D" id="2.40.50.140">
    <property type="entry name" value="Nucleic acid-binding proteins"/>
    <property type="match status" value="1"/>
</dbReference>
<dbReference type="HAMAP" id="MF_00252">
    <property type="entry name" value="Lys_tRNA_synth_class2"/>
    <property type="match status" value="1"/>
</dbReference>
<dbReference type="InterPro" id="IPR004364">
    <property type="entry name" value="Aa-tRNA-synt_II"/>
</dbReference>
<dbReference type="InterPro" id="IPR006195">
    <property type="entry name" value="aa-tRNA-synth_II"/>
</dbReference>
<dbReference type="InterPro" id="IPR045864">
    <property type="entry name" value="aa-tRNA-synth_II/BPL/LPL"/>
</dbReference>
<dbReference type="InterPro" id="IPR002313">
    <property type="entry name" value="Lys-tRNA-ligase_II"/>
</dbReference>
<dbReference type="InterPro" id="IPR044136">
    <property type="entry name" value="Lys-tRNA-ligase_II_N"/>
</dbReference>
<dbReference type="InterPro" id="IPR018149">
    <property type="entry name" value="Lys-tRNA-synth_II_C"/>
</dbReference>
<dbReference type="InterPro" id="IPR012340">
    <property type="entry name" value="NA-bd_OB-fold"/>
</dbReference>
<dbReference type="InterPro" id="IPR004365">
    <property type="entry name" value="NA-bd_OB_tRNA"/>
</dbReference>
<dbReference type="NCBIfam" id="TIGR00499">
    <property type="entry name" value="lysS_bact"/>
    <property type="match status" value="1"/>
</dbReference>
<dbReference type="NCBIfam" id="NF001756">
    <property type="entry name" value="PRK00484.1"/>
    <property type="match status" value="1"/>
</dbReference>
<dbReference type="PANTHER" id="PTHR42918:SF15">
    <property type="entry name" value="LYSINE--TRNA LIGASE, CHLOROPLASTIC_MITOCHONDRIAL"/>
    <property type="match status" value="1"/>
</dbReference>
<dbReference type="PANTHER" id="PTHR42918">
    <property type="entry name" value="LYSYL-TRNA SYNTHETASE"/>
    <property type="match status" value="1"/>
</dbReference>
<dbReference type="Pfam" id="PF00152">
    <property type="entry name" value="tRNA-synt_2"/>
    <property type="match status" value="1"/>
</dbReference>
<dbReference type="Pfam" id="PF01336">
    <property type="entry name" value="tRNA_anti-codon"/>
    <property type="match status" value="1"/>
</dbReference>
<dbReference type="PRINTS" id="PR00982">
    <property type="entry name" value="TRNASYNTHLYS"/>
</dbReference>
<dbReference type="SUPFAM" id="SSF55681">
    <property type="entry name" value="Class II aaRS and biotin synthetases"/>
    <property type="match status" value="1"/>
</dbReference>
<dbReference type="SUPFAM" id="SSF50249">
    <property type="entry name" value="Nucleic acid-binding proteins"/>
    <property type="match status" value="1"/>
</dbReference>
<dbReference type="PROSITE" id="PS50862">
    <property type="entry name" value="AA_TRNA_LIGASE_II"/>
    <property type="match status" value="1"/>
</dbReference>
<reference key="1">
    <citation type="submission" date="2008-02" db="EMBL/GenBank/DDBJ databases">
        <title>Complete sequence of Shewanella woodyi ATCC 51908.</title>
        <authorList>
            <consortium name="US DOE Joint Genome Institute"/>
            <person name="Copeland A."/>
            <person name="Lucas S."/>
            <person name="Lapidus A."/>
            <person name="Glavina del Rio T."/>
            <person name="Dalin E."/>
            <person name="Tice H."/>
            <person name="Bruce D."/>
            <person name="Goodwin L."/>
            <person name="Pitluck S."/>
            <person name="Sims D."/>
            <person name="Brettin T."/>
            <person name="Detter J.C."/>
            <person name="Han C."/>
            <person name="Kuske C.R."/>
            <person name="Schmutz J."/>
            <person name="Larimer F."/>
            <person name="Land M."/>
            <person name="Hauser L."/>
            <person name="Kyrpides N."/>
            <person name="Lykidis A."/>
            <person name="Zhao J.-S."/>
            <person name="Richardson P."/>
        </authorList>
    </citation>
    <scope>NUCLEOTIDE SEQUENCE [LARGE SCALE GENOMIC DNA]</scope>
    <source>
        <strain>ATCC 51908 / MS32</strain>
    </source>
</reference>
<feature type="chain" id="PRO_1000101148" description="Lysine--tRNA ligase">
    <location>
        <begin position="1"/>
        <end position="501"/>
    </location>
</feature>
<feature type="binding site" evidence="1">
    <location>
        <position position="411"/>
    </location>
    <ligand>
        <name>Mg(2+)</name>
        <dbReference type="ChEBI" id="CHEBI:18420"/>
        <label>1</label>
    </ligand>
</feature>
<feature type="binding site" evidence="1">
    <location>
        <position position="418"/>
    </location>
    <ligand>
        <name>Mg(2+)</name>
        <dbReference type="ChEBI" id="CHEBI:18420"/>
        <label>1</label>
    </ligand>
</feature>
<feature type="binding site" evidence="1">
    <location>
        <position position="418"/>
    </location>
    <ligand>
        <name>Mg(2+)</name>
        <dbReference type="ChEBI" id="CHEBI:18420"/>
        <label>2</label>
    </ligand>
</feature>
<proteinExistence type="inferred from homology"/>
<comment type="catalytic activity">
    <reaction evidence="1">
        <text>tRNA(Lys) + L-lysine + ATP = L-lysyl-tRNA(Lys) + AMP + diphosphate</text>
        <dbReference type="Rhea" id="RHEA:20792"/>
        <dbReference type="Rhea" id="RHEA-COMP:9696"/>
        <dbReference type="Rhea" id="RHEA-COMP:9697"/>
        <dbReference type="ChEBI" id="CHEBI:30616"/>
        <dbReference type="ChEBI" id="CHEBI:32551"/>
        <dbReference type="ChEBI" id="CHEBI:33019"/>
        <dbReference type="ChEBI" id="CHEBI:78442"/>
        <dbReference type="ChEBI" id="CHEBI:78529"/>
        <dbReference type="ChEBI" id="CHEBI:456215"/>
        <dbReference type="EC" id="6.1.1.6"/>
    </reaction>
</comment>
<comment type="cofactor">
    <cofactor evidence="1">
        <name>Mg(2+)</name>
        <dbReference type="ChEBI" id="CHEBI:18420"/>
    </cofactor>
    <text evidence="1">Binds 3 Mg(2+) ions per subunit.</text>
</comment>
<comment type="subunit">
    <text evidence="1">Homodimer.</text>
</comment>
<comment type="subcellular location">
    <subcellularLocation>
        <location evidence="1">Cytoplasm</location>
    </subcellularLocation>
</comment>
<comment type="similarity">
    <text evidence="1">Belongs to the class-II aminoacyl-tRNA synthetase family.</text>
</comment>
<accession>B1KFR7</accession>
<sequence>MTEQVLPDENKLIAERRAKLEHIRANCPANGHPNNFDRKHKAADIQAEFGNNTKEELEGMGIQRSIAGRIMAKRGPFLVIQDVSGRIQAYAGKDVQKDLKATFQGLDIGDIIGVTGQLHLSGKGDLYVNMEEYQLLTKALRPLPEKFHGLTDQETRYRQRYVDLIVNEDSRNAFIMRSKVVSAIRNFMVKKEFMEVETPMMHSIPGGASARPFETHHNALDIAMYLRIAPELYLKRLVVGGFERVFEINRNFRNEGLSPRHNPEFTMMEFYMAYADFNDLMDLTEEMLSSIATELCGSPQLPYGEHTVDFGGPYARLSMLDAIKKYNPDNATIQSMTYEEVKDVEFMRDLAKSLGMTIEKFWTCGQLLEEIFGETAETQLMQPTFITGYPADISPLARRNDDNHFITDRFEFFIGGREVANGFSELNDAEDQDNRFKAQVDAKDAGDDEAMFYDADYITALEHGLPPTAGQGIGIDRLVMLFTNTHTIRDVILFPAMRPQA</sequence>
<evidence type="ECO:0000255" key="1">
    <source>
        <dbReference type="HAMAP-Rule" id="MF_00252"/>
    </source>
</evidence>
<keyword id="KW-0030">Aminoacyl-tRNA synthetase</keyword>
<keyword id="KW-0067">ATP-binding</keyword>
<keyword id="KW-0963">Cytoplasm</keyword>
<keyword id="KW-0436">Ligase</keyword>
<keyword id="KW-0460">Magnesium</keyword>
<keyword id="KW-0479">Metal-binding</keyword>
<keyword id="KW-0547">Nucleotide-binding</keyword>
<keyword id="KW-0648">Protein biosynthesis</keyword>
<keyword id="KW-1185">Reference proteome</keyword>
<gene>
    <name evidence="1" type="primary">lysS</name>
    <name type="ordered locus">Swoo_0940</name>
</gene>